<sequence>MAPLLGDNFPEIEVVTTHGRMKLPEAFKGKWFVLFSHPADFTPVCTTEFVAFQNRYDEFRKLNCELIGLSIDQVFSHIKWIEWIKEKLDIEIEFPVIADDTGRVAEMLGLIHPAKGTNTVRAVFIVDPEAVIRAVIYYPQELGRNMDEILRAVKALQVSDQNGVAMPANWPNNELVGDAVIIPPPISEAEAKERLEKAKAGDISCYDWWFCYKKI</sequence>
<gene>
    <name type="ordered locus">AF_0270</name>
</gene>
<evidence type="ECO:0000255" key="1">
    <source>
        <dbReference type="HAMAP-Rule" id="MF_00401"/>
    </source>
</evidence>
<evidence type="ECO:0000305" key="2"/>
<dbReference type="EC" id="1.11.1.24" evidence="1"/>
<dbReference type="EMBL" id="AE000782">
    <property type="protein sequence ID" value="AAB90968.1"/>
    <property type="status" value="ALT_FRAME"/>
    <property type="molecule type" value="Genomic_DNA"/>
</dbReference>
<dbReference type="PIR" id="F69283">
    <property type="entry name" value="F69283"/>
</dbReference>
<dbReference type="SMR" id="O29969"/>
<dbReference type="STRING" id="224325.AF_0270"/>
<dbReference type="PaxDb" id="224325-AF_0270"/>
<dbReference type="EnsemblBacteria" id="AAB90968">
    <property type="protein sequence ID" value="AAB90968"/>
    <property type="gene ID" value="AF_0270"/>
</dbReference>
<dbReference type="KEGG" id="afu:AF_0270"/>
<dbReference type="eggNOG" id="arCOG00312">
    <property type="taxonomic scope" value="Archaea"/>
</dbReference>
<dbReference type="HOGENOM" id="CLU_042529_4_4_2"/>
<dbReference type="PhylomeDB" id="O29969"/>
<dbReference type="Proteomes" id="UP000002199">
    <property type="component" value="Chromosome"/>
</dbReference>
<dbReference type="GO" id="GO:0005829">
    <property type="term" value="C:cytosol"/>
    <property type="evidence" value="ECO:0007669"/>
    <property type="project" value="TreeGrafter"/>
</dbReference>
<dbReference type="GO" id="GO:0008379">
    <property type="term" value="F:thioredoxin peroxidase activity"/>
    <property type="evidence" value="ECO:0007669"/>
    <property type="project" value="TreeGrafter"/>
</dbReference>
<dbReference type="GO" id="GO:0045454">
    <property type="term" value="P:cell redox homeostasis"/>
    <property type="evidence" value="ECO:0007669"/>
    <property type="project" value="TreeGrafter"/>
</dbReference>
<dbReference type="GO" id="GO:0033554">
    <property type="term" value="P:cellular response to stress"/>
    <property type="evidence" value="ECO:0007669"/>
    <property type="project" value="TreeGrafter"/>
</dbReference>
<dbReference type="GO" id="GO:0042744">
    <property type="term" value="P:hydrogen peroxide catabolic process"/>
    <property type="evidence" value="ECO:0007669"/>
    <property type="project" value="TreeGrafter"/>
</dbReference>
<dbReference type="GO" id="GO:0006979">
    <property type="term" value="P:response to oxidative stress"/>
    <property type="evidence" value="ECO:0007669"/>
    <property type="project" value="TreeGrafter"/>
</dbReference>
<dbReference type="CDD" id="cd03016">
    <property type="entry name" value="PRX_1cys"/>
    <property type="match status" value="1"/>
</dbReference>
<dbReference type="FunFam" id="3.30.1020.10:FF:000002">
    <property type="entry name" value="Peroxiredoxin"/>
    <property type="match status" value="1"/>
</dbReference>
<dbReference type="FunFam" id="3.40.30.10:FF:000011">
    <property type="entry name" value="Peroxiredoxin PRX1"/>
    <property type="match status" value="1"/>
</dbReference>
<dbReference type="Gene3D" id="3.30.1020.10">
    <property type="entry name" value="Antioxidant, Horf6, Chain A, domain2"/>
    <property type="match status" value="1"/>
</dbReference>
<dbReference type="Gene3D" id="3.40.30.10">
    <property type="entry name" value="Glutaredoxin"/>
    <property type="match status" value="1"/>
</dbReference>
<dbReference type="HAMAP" id="MF_00401">
    <property type="entry name" value="Peroxiredoxin"/>
    <property type="match status" value="1"/>
</dbReference>
<dbReference type="InterPro" id="IPR000866">
    <property type="entry name" value="AhpC/TSA"/>
</dbReference>
<dbReference type="InterPro" id="IPR050217">
    <property type="entry name" value="Peroxiredoxin"/>
</dbReference>
<dbReference type="InterPro" id="IPR024706">
    <property type="entry name" value="Peroxiredoxin_AhpC-typ"/>
</dbReference>
<dbReference type="InterPro" id="IPR019479">
    <property type="entry name" value="Peroxiredoxin_C"/>
</dbReference>
<dbReference type="InterPro" id="IPR022915">
    <property type="entry name" value="Peroxiredoxin_TDXH"/>
</dbReference>
<dbReference type="InterPro" id="IPR045020">
    <property type="entry name" value="PRX_1cys"/>
</dbReference>
<dbReference type="InterPro" id="IPR036249">
    <property type="entry name" value="Thioredoxin-like_sf"/>
</dbReference>
<dbReference type="InterPro" id="IPR013766">
    <property type="entry name" value="Thioredoxin_domain"/>
</dbReference>
<dbReference type="NCBIfam" id="NF009668">
    <property type="entry name" value="PRK13189.1"/>
    <property type="match status" value="1"/>
</dbReference>
<dbReference type="PANTHER" id="PTHR10681">
    <property type="entry name" value="THIOREDOXIN PEROXIDASE"/>
    <property type="match status" value="1"/>
</dbReference>
<dbReference type="PANTHER" id="PTHR10681:SF128">
    <property type="entry name" value="THIOREDOXIN-DEPENDENT PEROXIDE REDUCTASE, MITOCHONDRIAL"/>
    <property type="match status" value="1"/>
</dbReference>
<dbReference type="Pfam" id="PF10417">
    <property type="entry name" value="1-cysPrx_C"/>
    <property type="match status" value="1"/>
</dbReference>
<dbReference type="Pfam" id="PF00578">
    <property type="entry name" value="AhpC-TSA"/>
    <property type="match status" value="1"/>
</dbReference>
<dbReference type="PIRSF" id="PIRSF000239">
    <property type="entry name" value="AHPC"/>
    <property type="match status" value="1"/>
</dbReference>
<dbReference type="SUPFAM" id="SSF52833">
    <property type="entry name" value="Thioredoxin-like"/>
    <property type="match status" value="1"/>
</dbReference>
<dbReference type="PROSITE" id="PS51352">
    <property type="entry name" value="THIOREDOXIN_2"/>
    <property type="match status" value="1"/>
</dbReference>
<keyword id="KW-0049">Antioxidant</keyword>
<keyword id="KW-0963">Cytoplasm</keyword>
<keyword id="KW-1015">Disulfide bond</keyword>
<keyword id="KW-0560">Oxidoreductase</keyword>
<keyword id="KW-0575">Peroxidase</keyword>
<keyword id="KW-0676">Redox-active center</keyword>
<keyword id="KW-1185">Reference proteome</keyword>
<name>TDXH_ARCFU</name>
<organism>
    <name type="scientific">Archaeoglobus fulgidus (strain ATCC 49558 / DSM 4304 / JCM 9628 / NBRC 100126 / VC-16)</name>
    <dbReference type="NCBI Taxonomy" id="224325"/>
    <lineage>
        <taxon>Archaea</taxon>
        <taxon>Methanobacteriati</taxon>
        <taxon>Methanobacteriota</taxon>
        <taxon>Archaeoglobi</taxon>
        <taxon>Archaeoglobales</taxon>
        <taxon>Archaeoglobaceae</taxon>
        <taxon>Archaeoglobus</taxon>
    </lineage>
</organism>
<feature type="chain" id="PRO_0000135154" description="Peroxiredoxin">
    <location>
        <begin position="1"/>
        <end position="215"/>
    </location>
</feature>
<feature type="domain" description="Thioredoxin" evidence="1">
    <location>
        <begin position="3"/>
        <end position="158"/>
    </location>
</feature>
<feature type="active site" description="Cysteine sulfenic acid (-SOH) intermediate" evidence="1">
    <location>
        <position position="45"/>
    </location>
</feature>
<feature type="binding site" evidence="1">
    <location>
        <position position="121"/>
    </location>
    <ligand>
        <name>substrate</name>
    </ligand>
</feature>
<feature type="disulfide bond" description="Interchain (with C-211); in linked form" evidence="1">
    <location>
        <position position="45"/>
    </location>
</feature>
<feature type="disulfide bond" description="Alternate" evidence="1">
    <location>
        <begin position="205"/>
        <end position="211"/>
    </location>
</feature>
<feature type="disulfide bond" description="Interchain (with C-45); in linked form" evidence="1">
    <location>
        <position position="211"/>
    </location>
</feature>
<protein>
    <recommendedName>
        <fullName evidence="1">Peroxiredoxin</fullName>
        <ecNumber evidence="1">1.11.1.24</ecNumber>
    </recommendedName>
    <alternativeName>
        <fullName evidence="1">Thioredoxin peroxidase</fullName>
    </alternativeName>
    <alternativeName>
        <fullName evidence="1">Thioredoxin-dependent peroxiredoxin</fullName>
    </alternativeName>
</protein>
<comment type="function">
    <text evidence="1">Thiol-specific peroxidase that catalyzes the reduction of hydrogen peroxide and organic hydroperoxides to water and alcohols, respectively. Plays a role in cell protection against oxidative stress by detoxifying peroxides.</text>
</comment>
<comment type="catalytic activity">
    <reaction evidence="1">
        <text>a hydroperoxide + [thioredoxin]-dithiol = an alcohol + [thioredoxin]-disulfide + H2O</text>
        <dbReference type="Rhea" id="RHEA:62620"/>
        <dbReference type="Rhea" id="RHEA-COMP:10698"/>
        <dbReference type="Rhea" id="RHEA-COMP:10700"/>
        <dbReference type="ChEBI" id="CHEBI:15377"/>
        <dbReference type="ChEBI" id="CHEBI:29950"/>
        <dbReference type="ChEBI" id="CHEBI:30879"/>
        <dbReference type="ChEBI" id="CHEBI:35924"/>
        <dbReference type="ChEBI" id="CHEBI:50058"/>
        <dbReference type="EC" id="1.11.1.24"/>
    </reaction>
</comment>
<comment type="subunit">
    <text evidence="1">Homodecamer. Pentamer of dimers that assemble into a ring structure.</text>
</comment>
<comment type="subcellular location">
    <subcellularLocation>
        <location evidence="1">Cytoplasm</location>
    </subcellularLocation>
</comment>
<comment type="miscellaneous">
    <text evidence="1">The active site is a conserved redox-active cysteine residue, the peroxidatic cysteine (C(P)), which makes the nucleophilic attack on the peroxide substrate. The peroxide oxidizes the C(P)-SH to cysteine sulfenic acid (C(P)-SOH), which then reacts with another cysteine residue, the resolving cysteine (C(R)), to form a disulfide bridge. The disulfide is subsequently reduced by an appropriate electron donor to complete the catalytic cycle. Although the primary sequence of this enzyme is similar to those of the 1-Cys Prx6 enzymes, its catalytic properties resemble those of the typical 2-Cys Prxs and C(R) is provided by the other dimeric subunit to form an intersubunit disulfide. The disulfide is subsequently reduced by thioredoxin.</text>
</comment>
<comment type="similarity">
    <text evidence="1">Belongs to the peroxiredoxin family. Prx6 subfamily.</text>
</comment>
<comment type="sequence caution" evidence="2">
    <conflict type="frameshift">
        <sequence resource="EMBL-CDS" id="AAB90968"/>
    </conflict>
</comment>
<proteinExistence type="inferred from homology"/>
<accession>O29969</accession>
<reference key="1">
    <citation type="journal article" date="1997" name="Nature">
        <title>The complete genome sequence of the hyperthermophilic, sulphate-reducing archaeon Archaeoglobus fulgidus.</title>
        <authorList>
            <person name="Klenk H.-P."/>
            <person name="Clayton R.A."/>
            <person name="Tomb J.-F."/>
            <person name="White O."/>
            <person name="Nelson K.E."/>
            <person name="Ketchum K.A."/>
            <person name="Dodson R.J."/>
            <person name="Gwinn M.L."/>
            <person name="Hickey E.K."/>
            <person name="Peterson J.D."/>
            <person name="Richardson D.L."/>
            <person name="Kerlavage A.R."/>
            <person name="Graham D.E."/>
            <person name="Kyrpides N.C."/>
            <person name="Fleischmann R.D."/>
            <person name="Quackenbush J."/>
            <person name="Lee N.H."/>
            <person name="Sutton G.G."/>
            <person name="Gill S.R."/>
            <person name="Kirkness E.F."/>
            <person name="Dougherty B.A."/>
            <person name="McKenney K."/>
            <person name="Adams M.D."/>
            <person name="Loftus B.J."/>
            <person name="Peterson S.N."/>
            <person name="Reich C.I."/>
            <person name="McNeil L.K."/>
            <person name="Badger J.H."/>
            <person name="Glodek A."/>
            <person name="Zhou L."/>
            <person name="Overbeek R."/>
            <person name="Gocayne J.D."/>
            <person name="Weidman J.F."/>
            <person name="McDonald L.A."/>
            <person name="Utterback T.R."/>
            <person name="Cotton M.D."/>
            <person name="Spriggs T."/>
            <person name="Artiach P."/>
            <person name="Kaine B.P."/>
            <person name="Sykes S.M."/>
            <person name="Sadow P.W."/>
            <person name="D'Andrea K.P."/>
            <person name="Bowman C."/>
            <person name="Fujii C."/>
            <person name="Garland S.A."/>
            <person name="Mason T.M."/>
            <person name="Olsen G.J."/>
            <person name="Fraser C.M."/>
            <person name="Smith H.O."/>
            <person name="Woese C.R."/>
            <person name="Venter J.C."/>
        </authorList>
    </citation>
    <scope>NUCLEOTIDE SEQUENCE [LARGE SCALE GENOMIC DNA]</scope>
    <source>
        <strain>ATCC 49558 / DSM 4304 / JCM 9628 / NBRC 100126 / VC-16</strain>
    </source>
</reference>